<proteinExistence type="inferred from homology"/>
<evidence type="ECO:0000255" key="1">
    <source>
        <dbReference type="HAMAP-Rule" id="MF_00361"/>
    </source>
</evidence>
<keyword id="KW-0067">ATP-binding</keyword>
<keyword id="KW-0963">Cytoplasm</keyword>
<keyword id="KW-0418">Kinase</keyword>
<keyword id="KW-0520">NAD</keyword>
<keyword id="KW-0521">NADP</keyword>
<keyword id="KW-0547">Nucleotide-binding</keyword>
<keyword id="KW-1185">Reference proteome</keyword>
<keyword id="KW-0808">Transferase</keyword>
<accession>B5EFY8</accession>
<sequence length="288" mass="31349">MKKIAIFAKVHDPRALAVAEELIEWLAARGVTAHVEEHLSKRLRRTTLAESSESTEIAADADLVVVLGGDGTLIAAARLVGERDVPILAVNLGSLGFLTEITLNELYPSVERCLAGDFEVSERMMLMASVERSGEVVELHRVLNDVVINKGALARIIDMETSVNGRYLTTFKADGLIVSTPTGSTGYSLSANGPILHPELECISLTPICPHTLTNRPLVMAADAHIAIKLKYAPDESVFLTLDGQVGMKLLSGDVVQITKAAHVTRLIQSRSKDYFEVLRTKLKWGER</sequence>
<dbReference type="EC" id="2.7.1.23" evidence="1"/>
<dbReference type="EMBL" id="CP001124">
    <property type="protein sequence ID" value="ACH39453.1"/>
    <property type="molecule type" value="Genomic_DNA"/>
</dbReference>
<dbReference type="RefSeq" id="WP_012530876.1">
    <property type="nucleotide sequence ID" value="NC_011146.1"/>
</dbReference>
<dbReference type="SMR" id="B5EFY8"/>
<dbReference type="STRING" id="404380.Gbem_2445"/>
<dbReference type="KEGG" id="gbm:Gbem_2445"/>
<dbReference type="eggNOG" id="COG0061">
    <property type="taxonomic scope" value="Bacteria"/>
</dbReference>
<dbReference type="HOGENOM" id="CLU_008831_0_1_7"/>
<dbReference type="OrthoDB" id="9774737at2"/>
<dbReference type="Proteomes" id="UP000008825">
    <property type="component" value="Chromosome"/>
</dbReference>
<dbReference type="GO" id="GO:0005737">
    <property type="term" value="C:cytoplasm"/>
    <property type="evidence" value="ECO:0007669"/>
    <property type="project" value="UniProtKB-SubCell"/>
</dbReference>
<dbReference type="GO" id="GO:0005524">
    <property type="term" value="F:ATP binding"/>
    <property type="evidence" value="ECO:0007669"/>
    <property type="project" value="UniProtKB-KW"/>
</dbReference>
<dbReference type="GO" id="GO:0046872">
    <property type="term" value="F:metal ion binding"/>
    <property type="evidence" value="ECO:0007669"/>
    <property type="project" value="UniProtKB-UniRule"/>
</dbReference>
<dbReference type="GO" id="GO:0051287">
    <property type="term" value="F:NAD binding"/>
    <property type="evidence" value="ECO:0007669"/>
    <property type="project" value="UniProtKB-ARBA"/>
</dbReference>
<dbReference type="GO" id="GO:0003951">
    <property type="term" value="F:NAD+ kinase activity"/>
    <property type="evidence" value="ECO:0007669"/>
    <property type="project" value="UniProtKB-UniRule"/>
</dbReference>
<dbReference type="GO" id="GO:0019674">
    <property type="term" value="P:NAD metabolic process"/>
    <property type="evidence" value="ECO:0007669"/>
    <property type="project" value="InterPro"/>
</dbReference>
<dbReference type="GO" id="GO:0006741">
    <property type="term" value="P:NADP biosynthetic process"/>
    <property type="evidence" value="ECO:0007669"/>
    <property type="project" value="UniProtKB-UniRule"/>
</dbReference>
<dbReference type="FunFam" id="2.60.200.30:FF:000009">
    <property type="entry name" value="Poly(P)/ATP NAD kinase"/>
    <property type="match status" value="1"/>
</dbReference>
<dbReference type="Gene3D" id="3.40.50.10330">
    <property type="entry name" value="Probable inorganic polyphosphate/atp-NAD kinase, domain 1"/>
    <property type="match status" value="1"/>
</dbReference>
<dbReference type="Gene3D" id="2.60.200.30">
    <property type="entry name" value="Probable inorganic polyphosphate/atp-NAD kinase, domain 2"/>
    <property type="match status" value="1"/>
</dbReference>
<dbReference type="HAMAP" id="MF_00361">
    <property type="entry name" value="NAD_kinase"/>
    <property type="match status" value="1"/>
</dbReference>
<dbReference type="InterPro" id="IPR017438">
    <property type="entry name" value="ATP-NAD_kinase_N"/>
</dbReference>
<dbReference type="InterPro" id="IPR017437">
    <property type="entry name" value="ATP-NAD_kinase_PpnK-typ_C"/>
</dbReference>
<dbReference type="InterPro" id="IPR016064">
    <property type="entry name" value="NAD/diacylglycerol_kinase_sf"/>
</dbReference>
<dbReference type="InterPro" id="IPR002504">
    <property type="entry name" value="NADK"/>
</dbReference>
<dbReference type="PANTHER" id="PTHR20275">
    <property type="entry name" value="NAD KINASE"/>
    <property type="match status" value="1"/>
</dbReference>
<dbReference type="PANTHER" id="PTHR20275:SF0">
    <property type="entry name" value="NAD KINASE"/>
    <property type="match status" value="1"/>
</dbReference>
<dbReference type="Pfam" id="PF01513">
    <property type="entry name" value="NAD_kinase"/>
    <property type="match status" value="1"/>
</dbReference>
<dbReference type="Pfam" id="PF20143">
    <property type="entry name" value="NAD_kinase_C"/>
    <property type="match status" value="1"/>
</dbReference>
<dbReference type="SUPFAM" id="SSF111331">
    <property type="entry name" value="NAD kinase/diacylglycerol kinase-like"/>
    <property type="match status" value="1"/>
</dbReference>
<reference key="1">
    <citation type="submission" date="2008-07" db="EMBL/GenBank/DDBJ databases">
        <title>Complete sequence of Geobacter bemidjiensis BEM.</title>
        <authorList>
            <consortium name="US DOE Joint Genome Institute"/>
            <person name="Lucas S."/>
            <person name="Copeland A."/>
            <person name="Lapidus A."/>
            <person name="Glavina del Rio T."/>
            <person name="Dalin E."/>
            <person name="Tice H."/>
            <person name="Bruce D."/>
            <person name="Goodwin L."/>
            <person name="Pitluck S."/>
            <person name="Kiss H."/>
            <person name="Brettin T."/>
            <person name="Detter J.C."/>
            <person name="Han C."/>
            <person name="Kuske C.R."/>
            <person name="Schmutz J."/>
            <person name="Larimer F."/>
            <person name="Land M."/>
            <person name="Hauser L."/>
            <person name="Kyrpides N."/>
            <person name="Lykidis A."/>
            <person name="Lovley D."/>
            <person name="Richardson P."/>
        </authorList>
    </citation>
    <scope>NUCLEOTIDE SEQUENCE [LARGE SCALE GENOMIC DNA]</scope>
    <source>
        <strain>ATCC BAA-1014 / DSM 16622 / JCM 12645 / Bem</strain>
    </source>
</reference>
<name>NADK_CITBB</name>
<organism>
    <name type="scientific">Citrifermentans bemidjiense (strain ATCC BAA-1014 / DSM 16622 / JCM 12645 / Bem)</name>
    <name type="common">Geobacter bemidjiensis</name>
    <dbReference type="NCBI Taxonomy" id="404380"/>
    <lineage>
        <taxon>Bacteria</taxon>
        <taxon>Pseudomonadati</taxon>
        <taxon>Thermodesulfobacteriota</taxon>
        <taxon>Desulfuromonadia</taxon>
        <taxon>Geobacterales</taxon>
        <taxon>Geobacteraceae</taxon>
        <taxon>Citrifermentans</taxon>
    </lineage>
</organism>
<protein>
    <recommendedName>
        <fullName evidence="1">NAD kinase</fullName>
        <ecNumber evidence="1">2.7.1.23</ecNumber>
    </recommendedName>
    <alternativeName>
        <fullName evidence="1">ATP-dependent NAD kinase</fullName>
    </alternativeName>
</protein>
<comment type="function">
    <text evidence="1">Involved in the regulation of the intracellular balance of NAD and NADP, and is a key enzyme in the biosynthesis of NADP. Catalyzes specifically the phosphorylation on 2'-hydroxyl of the adenosine moiety of NAD to yield NADP.</text>
</comment>
<comment type="catalytic activity">
    <reaction evidence="1">
        <text>NAD(+) + ATP = ADP + NADP(+) + H(+)</text>
        <dbReference type="Rhea" id="RHEA:18629"/>
        <dbReference type="ChEBI" id="CHEBI:15378"/>
        <dbReference type="ChEBI" id="CHEBI:30616"/>
        <dbReference type="ChEBI" id="CHEBI:57540"/>
        <dbReference type="ChEBI" id="CHEBI:58349"/>
        <dbReference type="ChEBI" id="CHEBI:456216"/>
        <dbReference type="EC" id="2.7.1.23"/>
    </reaction>
</comment>
<comment type="cofactor">
    <cofactor evidence="1">
        <name>a divalent metal cation</name>
        <dbReference type="ChEBI" id="CHEBI:60240"/>
    </cofactor>
</comment>
<comment type="subcellular location">
    <subcellularLocation>
        <location evidence="1">Cytoplasm</location>
    </subcellularLocation>
</comment>
<comment type="similarity">
    <text evidence="1">Belongs to the NAD kinase family.</text>
</comment>
<feature type="chain" id="PRO_1000120862" description="NAD kinase">
    <location>
        <begin position="1"/>
        <end position="288"/>
    </location>
</feature>
<feature type="active site" description="Proton acceptor" evidence="1">
    <location>
        <position position="70"/>
    </location>
</feature>
<feature type="binding site" evidence="1">
    <location>
        <begin position="70"/>
        <end position="71"/>
    </location>
    <ligand>
        <name>NAD(+)</name>
        <dbReference type="ChEBI" id="CHEBI:57540"/>
    </ligand>
</feature>
<feature type="binding site" evidence="1">
    <location>
        <begin position="144"/>
        <end position="145"/>
    </location>
    <ligand>
        <name>NAD(+)</name>
        <dbReference type="ChEBI" id="CHEBI:57540"/>
    </ligand>
</feature>
<feature type="binding site" evidence="1">
    <location>
        <position position="155"/>
    </location>
    <ligand>
        <name>NAD(+)</name>
        <dbReference type="ChEBI" id="CHEBI:57540"/>
    </ligand>
</feature>
<feature type="binding site" evidence="1">
    <location>
        <position position="172"/>
    </location>
    <ligand>
        <name>NAD(+)</name>
        <dbReference type="ChEBI" id="CHEBI:57540"/>
    </ligand>
</feature>
<feature type="binding site" evidence="1">
    <location>
        <position position="174"/>
    </location>
    <ligand>
        <name>NAD(+)</name>
        <dbReference type="ChEBI" id="CHEBI:57540"/>
    </ligand>
</feature>
<feature type="binding site" evidence="1">
    <location>
        <begin position="185"/>
        <end position="190"/>
    </location>
    <ligand>
        <name>NAD(+)</name>
        <dbReference type="ChEBI" id="CHEBI:57540"/>
    </ligand>
</feature>
<feature type="binding site" evidence="1">
    <location>
        <position position="245"/>
    </location>
    <ligand>
        <name>NAD(+)</name>
        <dbReference type="ChEBI" id="CHEBI:57540"/>
    </ligand>
</feature>
<gene>
    <name evidence="1" type="primary">nadK</name>
    <name type="ordered locus">Gbem_2445</name>
</gene>